<protein>
    <recommendedName>
        <fullName>Uncharacterized inner membrane transporter YedA</fullName>
    </recommendedName>
</protein>
<dbReference type="EMBL" id="AE014075">
    <property type="protein sequence ID" value="AAN80837.1"/>
    <property type="molecule type" value="Genomic_DNA"/>
</dbReference>
<dbReference type="RefSeq" id="WP_001212226.1">
    <property type="nucleotide sequence ID" value="NZ_CP051263.1"/>
</dbReference>
<dbReference type="SMR" id="P0AA71"/>
<dbReference type="STRING" id="199310.c2378"/>
<dbReference type="GeneID" id="86946874"/>
<dbReference type="KEGG" id="ecc:c2378"/>
<dbReference type="eggNOG" id="COG0697">
    <property type="taxonomic scope" value="Bacteria"/>
</dbReference>
<dbReference type="HOGENOM" id="CLU_033863_5_1_6"/>
<dbReference type="BioCyc" id="ECOL199310:C2378-MONOMER"/>
<dbReference type="Proteomes" id="UP000001410">
    <property type="component" value="Chromosome"/>
</dbReference>
<dbReference type="GO" id="GO:0005886">
    <property type="term" value="C:plasma membrane"/>
    <property type="evidence" value="ECO:0007669"/>
    <property type="project" value="UniProtKB-SubCell"/>
</dbReference>
<dbReference type="InterPro" id="IPR050638">
    <property type="entry name" value="AA-Vitamin_Transporters"/>
</dbReference>
<dbReference type="InterPro" id="IPR004779">
    <property type="entry name" value="CO/AA/NH_transpt"/>
</dbReference>
<dbReference type="InterPro" id="IPR000620">
    <property type="entry name" value="EamA_dom"/>
</dbReference>
<dbReference type="NCBIfam" id="TIGR00950">
    <property type="entry name" value="2A78"/>
    <property type="match status" value="1"/>
</dbReference>
<dbReference type="NCBIfam" id="NF008432">
    <property type="entry name" value="PRK11272.1"/>
    <property type="match status" value="1"/>
</dbReference>
<dbReference type="PANTHER" id="PTHR32322:SF2">
    <property type="entry name" value="EAMA DOMAIN-CONTAINING PROTEIN"/>
    <property type="match status" value="1"/>
</dbReference>
<dbReference type="PANTHER" id="PTHR32322">
    <property type="entry name" value="INNER MEMBRANE TRANSPORTER"/>
    <property type="match status" value="1"/>
</dbReference>
<dbReference type="Pfam" id="PF00892">
    <property type="entry name" value="EamA"/>
    <property type="match status" value="2"/>
</dbReference>
<dbReference type="SUPFAM" id="SSF103481">
    <property type="entry name" value="Multidrug resistance efflux transporter EmrE"/>
    <property type="match status" value="2"/>
</dbReference>
<feature type="chain" id="PRO_0000108167" description="Uncharacterized inner membrane transporter YedA">
    <location>
        <begin position="1"/>
        <end position="306"/>
    </location>
</feature>
<feature type="topological domain" description="Cytoplasmic" evidence="2">
    <location>
        <begin position="1"/>
        <end position="6"/>
    </location>
</feature>
<feature type="transmembrane region" description="Helical" evidence="2">
    <location>
        <begin position="7"/>
        <end position="27"/>
    </location>
</feature>
<feature type="topological domain" description="Periplasmic" evidence="2">
    <location>
        <begin position="28"/>
        <end position="36"/>
    </location>
</feature>
<feature type="transmembrane region" description="Helical" evidence="2">
    <location>
        <begin position="37"/>
        <end position="57"/>
    </location>
</feature>
<feature type="topological domain" description="Cytoplasmic" evidence="2">
    <location>
        <begin position="58"/>
        <end position="67"/>
    </location>
</feature>
<feature type="transmembrane region" description="Helical" evidence="2">
    <location>
        <begin position="68"/>
        <end position="88"/>
    </location>
</feature>
<feature type="topological domain" description="Periplasmic" evidence="2">
    <location>
        <begin position="89"/>
        <end position="93"/>
    </location>
</feature>
<feature type="transmembrane region" description="Helical" evidence="2">
    <location>
        <begin position="94"/>
        <end position="114"/>
    </location>
</feature>
<feature type="topological domain" description="Cytoplasmic" evidence="2">
    <location>
        <begin position="115"/>
        <end position="125"/>
    </location>
</feature>
<feature type="transmembrane region" description="Helical" evidence="2">
    <location>
        <begin position="126"/>
        <end position="146"/>
    </location>
</feature>
<feature type="topological domain" description="Periplasmic" evidence="2">
    <location>
        <begin position="147"/>
        <end position="148"/>
    </location>
</feature>
<feature type="transmembrane region" description="Helical" evidence="2">
    <location>
        <begin position="149"/>
        <end position="169"/>
    </location>
</feature>
<feature type="topological domain" description="Cytoplasmic" evidence="2">
    <location>
        <begin position="170"/>
        <end position="173"/>
    </location>
</feature>
<feature type="transmembrane region" description="Helical" evidence="2">
    <location>
        <begin position="174"/>
        <end position="194"/>
    </location>
</feature>
<feature type="topological domain" description="Periplasmic" evidence="2">
    <location>
        <begin position="195"/>
        <end position="206"/>
    </location>
</feature>
<feature type="transmembrane region" description="Helical" evidence="2">
    <location>
        <begin position="207"/>
        <end position="227"/>
    </location>
</feature>
<feature type="topological domain" description="Cytoplasmic" evidence="2">
    <location>
        <begin position="228"/>
        <end position="239"/>
    </location>
</feature>
<feature type="transmembrane region" description="Helical" evidence="2">
    <location>
        <begin position="240"/>
        <end position="260"/>
    </location>
</feature>
<feature type="topological domain" description="Periplasmic" evidence="2">
    <location>
        <begin position="261"/>
        <end position="269"/>
    </location>
</feature>
<feature type="transmembrane region" description="Helical" evidence="2">
    <location>
        <begin position="270"/>
        <end position="290"/>
    </location>
</feature>
<feature type="topological domain" description="Cytoplasmic" evidence="2">
    <location>
        <begin position="291"/>
        <end position="306"/>
    </location>
</feature>
<feature type="domain" description="EamA 1">
    <location>
        <begin position="18"/>
        <end position="141"/>
    </location>
</feature>
<feature type="domain" description="EamA 2">
    <location>
        <begin position="160"/>
        <end position="285"/>
    </location>
</feature>
<sequence>MRFRQLLPLFGALFALYIIWGSTYFVIRIGVESWPPLMMAGVRFLAAGILLLAFLLLRGHKLPPLRPLLNAALIGLLLLAVGNGMVTVAEHQNVPSGIAAVVVATVPLFTLCFSRLFGIKTRKLEWVGIAIGLAGIIMLNSGGNLSGNPWGAILILIGSISWAFGSVYGSRITLPVGMMAGAIEMLAAGVVLMIASMIAGEKLTALPSLSGFLAVGYLALFGSIIAINAYMYLIRNVSPALATSYAYVNPVVAVLLGTGLGGETLSKIEWLALGVIVFAVVLVTLGKYLFPAKPVVAPVIQDASSE</sequence>
<evidence type="ECO:0000250" key="1"/>
<evidence type="ECO:0000255" key="2"/>
<evidence type="ECO:0000305" key="3"/>
<comment type="subcellular location">
    <subcellularLocation>
        <location evidence="1">Cell inner membrane</location>
        <topology evidence="1">Multi-pass membrane protein</topology>
    </subcellularLocation>
</comment>
<comment type="similarity">
    <text evidence="3">Belongs to the EamA transporter family.</text>
</comment>
<accession>P0AA71</accession>
<accession>P09185</accession>
<name>YEDA_ECOL6</name>
<gene>
    <name type="primary">yedA</name>
    <name type="ordered locus">c2378</name>
</gene>
<keyword id="KW-0997">Cell inner membrane</keyword>
<keyword id="KW-1003">Cell membrane</keyword>
<keyword id="KW-0472">Membrane</keyword>
<keyword id="KW-1185">Reference proteome</keyword>
<keyword id="KW-0677">Repeat</keyword>
<keyword id="KW-0812">Transmembrane</keyword>
<keyword id="KW-1133">Transmembrane helix</keyword>
<keyword id="KW-0813">Transport</keyword>
<proteinExistence type="inferred from homology"/>
<organism>
    <name type="scientific">Escherichia coli O6:H1 (strain CFT073 / ATCC 700928 / UPEC)</name>
    <dbReference type="NCBI Taxonomy" id="199310"/>
    <lineage>
        <taxon>Bacteria</taxon>
        <taxon>Pseudomonadati</taxon>
        <taxon>Pseudomonadota</taxon>
        <taxon>Gammaproteobacteria</taxon>
        <taxon>Enterobacterales</taxon>
        <taxon>Enterobacteriaceae</taxon>
        <taxon>Escherichia</taxon>
    </lineage>
</organism>
<reference key="1">
    <citation type="journal article" date="2002" name="Proc. Natl. Acad. Sci. U.S.A.">
        <title>Extensive mosaic structure revealed by the complete genome sequence of uropathogenic Escherichia coli.</title>
        <authorList>
            <person name="Welch R.A."/>
            <person name="Burland V."/>
            <person name="Plunkett G. III"/>
            <person name="Redford P."/>
            <person name="Roesch P."/>
            <person name="Rasko D."/>
            <person name="Buckles E.L."/>
            <person name="Liou S.-R."/>
            <person name="Boutin A."/>
            <person name="Hackett J."/>
            <person name="Stroud D."/>
            <person name="Mayhew G.F."/>
            <person name="Rose D.J."/>
            <person name="Zhou S."/>
            <person name="Schwartz D.C."/>
            <person name="Perna N.T."/>
            <person name="Mobley H.L.T."/>
            <person name="Donnenberg M.S."/>
            <person name="Blattner F.R."/>
        </authorList>
    </citation>
    <scope>NUCLEOTIDE SEQUENCE [LARGE SCALE GENOMIC DNA]</scope>
    <source>
        <strain>CFT073 / ATCC 700928 / UPEC</strain>
    </source>
</reference>